<sequence length="923" mass="105607">MSHYDFKAIEQKWQQYWKNNQIFRTTIEPSKPKYYILDMFPYPSGEGLHVGHPLGYIASDIVARYKRSKGYQVLHPMGFDAFGLPAEQFAIQTGQHPAITTAKNIGRYKQQLCQLGLSYDWDRCISTCEPAYYKWTQWIFIQLFNSWYDISLQKARPIDELITLFDQQGNQQVQASCDKEVSLFTAKEWQAMDEESKQQHLLAYRLAFLEDTTVNWCPELGTVLANEEVKDGLSERGGYPVIRKQMKQWSLRITAYTDRLLAGLEHLKWPLSTKEMQRNWIGRSIGAELNFTVIANGQEHTIPVFTTRPDTLFGVTYLALSPEHPLAKLISTGTQQAAIDTYITQATNRSERDRLADVNHVTGMFTGAYAIHPFTKQPLPIWIADYVLAGYGTGAVMGVPAHDSRDYAFAQHFQLPIIQVVAGGDTAQSAYEAREGSLFNSQFLNGLSIQEATKQAIQKLESLGIGKQKTTYRLRNAIFSRQRYWGEPIPIYYKNNIPYPIPAEELPLELPSLASFKPTPTGEPPLGHAPNWKTKEGYPIELSTMPGWAGSSWYFFRYMDPNNEASFVGSTAQNYWQAVDLYLGGAEHATGHLLYARFWTQFLYDLGYVNIEEPFQELIHQGMIQGKSSFVYRIKGTNQFVSYNLRHAYETTAMHVDIHLVKNNILDLERFKNWRPDLQTATFVLENGQYICGSEVEKMSKSKYNTVNPDTVVEQYGADTLRLYTMFLGPIEQAKPWDMHGIEGVFRFLVKVWRLFYLEKGAIITNEVPTKEVQKAIHKAIKKVEEDIKRYAFNTAVSNLMICVNELTALKCNNRAALTNLVLILAPFAPHLAEELWEILGHQHSIAQAPFPTYEEIYLQEETYEYPIAINGKVRAKINFPVDMPQGQIEEQVLTHESIQKWIQGQQIKRVIVISSKMVNIVI</sequence>
<comment type="catalytic activity">
    <reaction evidence="1">
        <text>tRNA(Leu) + L-leucine + ATP = L-leucyl-tRNA(Leu) + AMP + diphosphate</text>
        <dbReference type="Rhea" id="RHEA:11688"/>
        <dbReference type="Rhea" id="RHEA-COMP:9613"/>
        <dbReference type="Rhea" id="RHEA-COMP:9622"/>
        <dbReference type="ChEBI" id="CHEBI:30616"/>
        <dbReference type="ChEBI" id="CHEBI:33019"/>
        <dbReference type="ChEBI" id="CHEBI:57427"/>
        <dbReference type="ChEBI" id="CHEBI:78442"/>
        <dbReference type="ChEBI" id="CHEBI:78494"/>
        <dbReference type="ChEBI" id="CHEBI:456215"/>
        <dbReference type="EC" id="6.1.1.4"/>
    </reaction>
</comment>
<comment type="subcellular location">
    <subcellularLocation>
        <location evidence="1">Cytoplasm</location>
    </subcellularLocation>
</comment>
<comment type="similarity">
    <text evidence="1">Belongs to the class-I aminoacyl-tRNA synthetase family.</text>
</comment>
<protein>
    <recommendedName>
        <fullName evidence="1">Leucine--tRNA ligase</fullName>
        <ecNumber evidence="1">6.1.1.4</ecNumber>
    </recommendedName>
    <alternativeName>
        <fullName evidence="1">Leucyl-tRNA synthetase</fullName>
        <shortName evidence="1">LeuRS</shortName>
    </alternativeName>
</protein>
<accession>B3ETW5</accession>
<feature type="chain" id="PRO_1000091287" description="Leucine--tRNA ligase">
    <location>
        <begin position="1"/>
        <end position="923"/>
    </location>
</feature>
<feature type="short sequence motif" description="'HIGH' region">
    <location>
        <begin position="41"/>
        <end position="52"/>
    </location>
</feature>
<feature type="short sequence motif" description="'KMSKS' region">
    <location>
        <begin position="698"/>
        <end position="702"/>
    </location>
</feature>
<feature type="binding site" evidence="1">
    <location>
        <position position="701"/>
    </location>
    <ligand>
        <name>ATP</name>
        <dbReference type="ChEBI" id="CHEBI:30616"/>
    </ligand>
</feature>
<gene>
    <name evidence="1" type="primary">leuS</name>
    <name type="ordered locus">Aasi_1363</name>
</gene>
<dbReference type="EC" id="6.1.1.4" evidence="1"/>
<dbReference type="EMBL" id="CP001102">
    <property type="protein sequence ID" value="ACE06667.1"/>
    <property type="molecule type" value="Genomic_DNA"/>
</dbReference>
<dbReference type="RefSeq" id="WP_012473409.1">
    <property type="nucleotide sequence ID" value="NC_010830.1"/>
</dbReference>
<dbReference type="SMR" id="B3ETW5"/>
<dbReference type="STRING" id="452471.Aasi_1363"/>
<dbReference type="KEGG" id="aas:Aasi_1363"/>
<dbReference type="eggNOG" id="COG0495">
    <property type="taxonomic scope" value="Bacteria"/>
</dbReference>
<dbReference type="HOGENOM" id="CLU_004427_0_0_10"/>
<dbReference type="OrthoDB" id="9810365at2"/>
<dbReference type="Proteomes" id="UP000001227">
    <property type="component" value="Chromosome"/>
</dbReference>
<dbReference type="GO" id="GO:0005829">
    <property type="term" value="C:cytosol"/>
    <property type="evidence" value="ECO:0007669"/>
    <property type="project" value="TreeGrafter"/>
</dbReference>
<dbReference type="GO" id="GO:0002161">
    <property type="term" value="F:aminoacyl-tRNA deacylase activity"/>
    <property type="evidence" value="ECO:0007669"/>
    <property type="project" value="InterPro"/>
</dbReference>
<dbReference type="GO" id="GO:0005524">
    <property type="term" value="F:ATP binding"/>
    <property type="evidence" value="ECO:0007669"/>
    <property type="project" value="UniProtKB-UniRule"/>
</dbReference>
<dbReference type="GO" id="GO:0004823">
    <property type="term" value="F:leucine-tRNA ligase activity"/>
    <property type="evidence" value="ECO:0007669"/>
    <property type="project" value="UniProtKB-UniRule"/>
</dbReference>
<dbReference type="GO" id="GO:0006429">
    <property type="term" value="P:leucyl-tRNA aminoacylation"/>
    <property type="evidence" value="ECO:0007669"/>
    <property type="project" value="UniProtKB-UniRule"/>
</dbReference>
<dbReference type="CDD" id="cd07958">
    <property type="entry name" value="Anticodon_Ia_Leu_BEm"/>
    <property type="match status" value="1"/>
</dbReference>
<dbReference type="FunFam" id="3.40.50.620:FF:000056">
    <property type="entry name" value="Leucine--tRNA ligase"/>
    <property type="match status" value="1"/>
</dbReference>
<dbReference type="FunFam" id="3.40.50.620:FF:000060">
    <property type="entry name" value="Leucine--tRNA ligase"/>
    <property type="match status" value="1"/>
</dbReference>
<dbReference type="FunFam" id="1.10.730.10:FF:000011">
    <property type="entry name" value="Leucine--tRNA ligase chloroplastic/mitochondrial"/>
    <property type="match status" value="1"/>
</dbReference>
<dbReference type="Gene3D" id="3.40.50.620">
    <property type="entry name" value="HUPs"/>
    <property type="match status" value="3"/>
</dbReference>
<dbReference type="Gene3D" id="1.10.730.10">
    <property type="entry name" value="Isoleucyl-tRNA Synthetase, Domain 1"/>
    <property type="match status" value="1"/>
</dbReference>
<dbReference type="Gene3D" id="3.90.740.10">
    <property type="entry name" value="Valyl/Leucyl/Isoleucyl-tRNA synthetase, editing domain"/>
    <property type="match status" value="1"/>
</dbReference>
<dbReference type="HAMAP" id="MF_00049_B">
    <property type="entry name" value="Leu_tRNA_synth_B"/>
    <property type="match status" value="1"/>
</dbReference>
<dbReference type="InterPro" id="IPR001412">
    <property type="entry name" value="aa-tRNA-synth_I_CS"/>
</dbReference>
<dbReference type="InterPro" id="IPR002300">
    <property type="entry name" value="aa-tRNA-synth_Ia"/>
</dbReference>
<dbReference type="InterPro" id="IPR002302">
    <property type="entry name" value="Leu-tRNA-ligase"/>
</dbReference>
<dbReference type="InterPro" id="IPR025709">
    <property type="entry name" value="Leu_tRNA-synth_edit"/>
</dbReference>
<dbReference type="InterPro" id="IPR013155">
    <property type="entry name" value="M/V/L/I-tRNA-synth_anticd-bd"/>
</dbReference>
<dbReference type="InterPro" id="IPR014729">
    <property type="entry name" value="Rossmann-like_a/b/a_fold"/>
</dbReference>
<dbReference type="InterPro" id="IPR009080">
    <property type="entry name" value="tRNAsynth_Ia_anticodon-bd"/>
</dbReference>
<dbReference type="InterPro" id="IPR009008">
    <property type="entry name" value="Val/Leu/Ile-tRNA-synth_edit"/>
</dbReference>
<dbReference type="NCBIfam" id="TIGR00396">
    <property type="entry name" value="leuS_bact"/>
    <property type="match status" value="1"/>
</dbReference>
<dbReference type="PANTHER" id="PTHR43740:SF2">
    <property type="entry name" value="LEUCINE--TRNA LIGASE, MITOCHONDRIAL"/>
    <property type="match status" value="1"/>
</dbReference>
<dbReference type="PANTHER" id="PTHR43740">
    <property type="entry name" value="LEUCYL-TRNA SYNTHETASE"/>
    <property type="match status" value="1"/>
</dbReference>
<dbReference type="Pfam" id="PF08264">
    <property type="entry name" value="Anticodon_1"/>
    <property type="match status" value="1"/>
</dbReference>
<dbReference type="Pfam" id="PF00133">
    <property type="entry name" value="tRNA-synt_1"/>
    <property type="match status" value="2"/>
</dbReference>
<dbReference type="Pfam" id="PF13603">
    <property type="entry name" value="tRNA-synt_1_2"/>
    <property type="match status" value="1"/>
</dbReference>
<dbReference type="PRINTS" id="PR00985">
    <property type="entry name" value="TRNASYNTHLEU"/>
</dbReference>
<dbReference type="SUPFAM" id="SSF47323">
    <property type="entry name" value="Anticodon-binding domain of a subclass of class I aminoacyl-tRNA synthetases"/>
    <property type="match status" value="1"/>
</dbReference>
<dbReference type="SUPFAM" id="SSF52374">
    <property type="entry name" value="Nucleotidylyl transferase"/>
    <property type="match status" value="1"/>
</dbReference>
<dbReference type="SUPFAM" id="SSF50677">
    <property type="entry name" value="ValRS/IleRS/LeuRS editing domain"/>
    <property type="match status" value="1"/>
</dbReference>
<dbReference type="PROSITE" id="PS00178">
    <property type="entry name" value="AA_TRNA_LIGASE_I"/>
    <property type="match status" value="1"/>
</dbReference>
<proteinExistence type="inferred from homology"/>
<name>SYL_AMOA5</name>
<evidence type="ECO:0000255" key="1">
    <source>
        <dbReference type="HAMAP-Rule" id="MF_00049"/>
    </source>
</evidence>
<organism>
    <name type="scientific">Amoebophilus asiaticus (strain 5a2)</name>
    <dbReference type="NCBI Taxonomy" id="452471"/>
    <lineage>
        <taxon>Bacteria</taxon>
        <taxon>Pseudomonadati</taxon>
        <taxon>Bacteroidota</taxon>
        <taxon>Cytophagia</taxon>
        <taxon>Cytophagales</taxon>
        <taxon>Amoebophilaceae</taxon>
        <taxon>Candidatus Amoebophilus</taxon>
    </lineage>
</organism>
<keyword id="KW-0030">Aminoacyl-tRNA synthetase</keyword>
<keyword id="KW-0067">ATP-binding</keyword>
<keyword id="KW-0963">Cytoplasm</keyword>
<keyword id="KW-0436">Ligase</keyword>
<keyword id="KW-0547">Nucleotide-binding</keyword>
<keyword id="KW-0648">Protein biosynthesis</keyword>
<keyword id="KW-1185">Reference proteome</keyword>
<reference key="1">
    <citation type="journal article" date="2010" name="J. Bacteriol.">
        <title>The genome of the amoeba symbiont 'Candidatus Amoebophilus asiaticus' reveals common mechanisms for host cell interaction among amoeba-associated bacteria.</title>
        <authorList>
            <person name="Schmitz-Esser S."/>
            <person name="Tischler P."/>
            <person name="Arnold R."/>
            <person name="Montanaro J."/>
            <person name="Wagner M."/>
            <person name="Rattei T."/>
            <person name="Horn M."/>
        </authorList>
    </citation>
    <scope>NUCLEOTIDE SEQUENCE [LARGE SCALE GENOMIC DNA]</scope>
    <source>
        <strain>5a2</strain>
    </source>
</reference>